<feature type="chain" id="PRO_0000290903" description="Small ribosomal subunit protein uS8">
    <location>
        <begin position="1"/>
        <end position="130"/>
    </location>
</feature>
<sequence>MSMQDPIADMFTRVRNGQMASKVSVSMPSSKLRVAIAAVLKEEGYVSDFAVSGDVKPVLEVTLKYFEGKKVIESIERVSRPGLRIYKKKDELPKVLGGLGVAIVSTSKGVMTDRAARKAGMGGEIIGYVA</sequence>
<comment type="function">
    <text evidence="1">One of the primary rRNA binding proteins, it binds directly to 16S rRNA central domain where it helps coordinate assembly of the platform of the 30S subunit.</text>
</comment>
<comment type="subunit">
    <text evidence="1">Part of the 30S ribosomal subunit. Contacts proteins S5 and S12.</text>
</comment>
<comment type="similarity">
    <text evidence="1">Belongs to the universal ribosomal protein uS8 family.</text>
</comment>
<dbReference type="EMBL" id="CP000388">
    <property type="protein sequence ID" value="ABG39529.1"/>
    <property type="molecule type" value="Genomic_DNA"/>
</dbReference>
<dbReference type="RefSeq" id="WP_006990568.1">
    <property type="nucleotide sequence ID" value="NC_008228.1"/>
</dbReference>
<dbReference type="SMR" id="Q15X59"/>
<dbReference type="STRING" id="342610.Patl_1003"/>
<dbReference type="KEGG" id="pat:Patl_1003"/>
<dbReference type="eggNOG" id="COG0096">
    <property type="taxonomic scope" value="Bacteria"/>
</dbReference>
<dbReference type="HOGENOM" id="CLU_098428_0_0_6"/>
<dbReference type="OrthoDB" id="9802617at2"/>
<dbReference type="Proteomes" id="UP000001981">
    <property type="component" value="Chromosome"/>
</dbReference>
<dbReference type="GO" id="GO:1990904">
    <property type="term" value="C:ribonucleoprotein complex"/>
    <property type="evidence" value="ECO:0007669"/>
    <property type="project" value="UniProtKB-KW"/>
</dbReference>
<dbReference type="GO" id="GO:0005840">
    <property type="term" value="C:ribosome"/>
    <property type="evidence" value="ECO:0007669"/>
    <property type="project" value="UniProtKB-KW"/>
</dbReference>
<dbReference type="GO" id="GO:0019843">
    <property type="term" value="F:rRNA binding"/>
    <property type="evidence" value="ECO:0007669"/>
    <property type="project" value="UniProtKB-UniRule"/>
</dbReference>
<dbReference type="GO" id="GO:0003735">
    <property type="term" value="F:structural constituent of ribosome"/>
    <property type="evidence" value="ECO:0007669"/>
    <property type="project" value="InterPro"/>
</dbReference>
<dbReference type="GO" id="GO:0006412">
    <property type="term" value="P:translation"/>
    <property type="evidence" value="ECO:0007669"/>
    <property type="project" value="UniProtKB-UniRule"/>
</dbReference>
<dbReference type="FunFam" id="3.30.1370.30:FF:000003">
    <property type="entry name" value="30S ribosomal protein S8"/>
    <property type="match status" value="1"/>
</dbReference>
<dbReference type="FunFam" id="3.30.1490.10:FF:000001">
    <property type="entry name" value="30S ribosomal protein S8"/>
    <property type="match status" value="1"/>
</dbReference>
<dbReference type="Gene3D" id="3.30.1370.30">
    <property type="match status" value="1"/>
</dbReference>
<dbReference type="Gene3D" id="3.30.1490.10">
    <property type="match status" value="1"/>
</dbReference>
<dbReference type="HAMAP" id="MF_01302_B">
    <property type="entry name" value="Ribosomal_uS8_B"/>
    <property type="match status" value="1"/>
</dbReference>
<dbReference type="InterPro" id="IPR000630">
    <property type="entry name" value="Ribosomal_uS8"/>
</dbReference>
<dbReference type="InterPro" id="IPR047863">
    <property type="entry name" value="Ribosomal_uS8_CS"/>
</dbReference>
<dbReference type="InterPro" id="IPR035987">
    <property type="entry name" value="Ribosomal_uS8_sf"/>
</dbReference>
<dbReference type="NCBIfam" id="NF001109">
    <property type="entry name" value="PRK00136.1"/>
    <property type="match status" value="1"/>
</dbReference>
<dbReference type="PANTHER" id="PTHR11758">
    <property type="entry name" value="40S RIBOSOMAL PROTEIN S15A"/>
    <property type="match status" value="1"/>
</dbReference>
<dbReference type="Pfam" id="PF00410">
    <property type="entry name" value="Ribosomal_S8"/>
    <property type="match status" value="1"/>
</dbReference>
<dbReference type="SUPFAM" id="SSF56047">
    <property type="entry name" value="Ribosomal protein S8"/>
    <property type="match status" value="1"/>
</dbReference>
<dbReference type="PROSITE" id="PS00053">
    <property type="entry name" value="RIBOSOMAL_S8"/>
    <property type="match status" value="1"/>
</dbReference>
<proteinExistence type="inferred from homology"/>
<organism>
    <name type="scientific">Pseudoalteromonas atlantica (strain T6c / ATCC BAA-1087)</name>
    <dbReference type="NCBI Taxonomy" id="3042615"/>
    <lineage>
        <taxon>Bacteria</taxon>
        <taxon>Pseudomonadati</taxon>
        <taxon>Pseudomonadota</taxon>
        <taxon>Gammaproteobacteria</taxon>
        <taxon>Alteromonadales</taxon>
        <taxon>Alteromonadaceae</taxon>
        <taxon>Paraglaciecola</taxon>
    </lineage>
</organism>
<protein>
    <recommendedName>
        <fullName evidence="1">Small ribosomal subunit protein uS8</fullName>
    </recommendedName>
    <alternativeName>
        <fullName evidence="2">30S ribosomal protein S8</fullName>
    </alternativeName>
</protein>
<name>RS8_PSEA6</name>
<gene>
    <name evidence="1" type="primary">rpsH</name>
    <name type="ordered locus">Patl_1003</name>
</gene>
<evidence type="ECO:0000255" key="1">
    <source>
        <dbReference type="HAMAP-Rule" id="MF_01302"/>
    </source>
</evidence>
<evidence type="ECO:0000305" key="2"/>
<accession>Q15X59</accession>
<reference key="1">
    <citation type="submission" date="2006-06" db="EMBL/GenBank/DDBJ databases">
        <title>Complete sequence of Pseudoalteromonas atlantica T6c.</title>
        <authorList>
            <consortium name="US DOE Joint Genome Institute"/>
            <person name="Copeland A."/>
            <person name="Lucas S."/>
            <person name="Lapidus A."/>
            <person name="Barry K."/>
            <person name="Detter J.C."/>
            <person name="Glavina del Rio T."/>
            <person name="Hammon N."/>
            <person name="Israni S."/>
            <person name="Dalin E."/>
            <person name="Tice H."/>
            <person name="Pitluck S."/>
            <person name="Saunders E."/>
            <person name="Brettin T."/>
            <person name="Bruce D."/>
            <person name="Han C."/>
            <person name="Tapia R."/>
            <person name="Gilna P."/>
            <person name="Schmutz J."/>
            <person name="Larimer F."/>
            <person name="Land M."/>
            <person name="Hauser L."/>
            <person name="Kyrpides N."/>
            <person name="Kim E."/>
            <person name="Karls A.C."/>
            <person name="Bartlett D."/>
            <person name="Higgins B.P."/>
            <person name="Richardson P."/>
        </authorList>
    </citation>
    <scope>NUCLEOTIDE SEQUENCE [LARGE SCALE GENOMIC DNA]</scope>
    <source>
        <strain>T6c / ATCC BAA-1087</strain>
    </source>
</reference>
<keyword id="KW-0687">Ribonucleoprotein</keyword>
<keyword id="KW-0689">Ribosomal protein</keyword>
<keyword id="KW-0694">RNA-binding</keyword>
<keyword id="KW-0699">rRNA-binding</keyword>